<proteinExistence type="evidence at protein level"/>
<sequence>MCQSRYLLFLATLALLNHLSLARVIPVSGPARCLSQSRNLLKTTDDMVKTAREKLKHYSCTAEDIDHEDITRDQTSTLKTCLPLELHKNESCLATRETSSTTRGSCLPPQKTSLMMTLCLGSIYEDLKMYQTEFQAINAALQNHNHQQIILDKGMLVAIDELMQSLNHNGETLRQKPPVGEADPYRVKMKLCILLHAFSTRVVTINRVMGYLSSA</sequence>
<reference key="1">
    <citation type="journal article" date="1992" name="J. Immunol.">
        <title>Cloning and expression of murine IL-12.</title>
        <authorList>
            <person name="Schoenhaut D.S."/>
            <person name="Chua A.O."/>
            <person name="Wolitzky A.G."/>
            <person name="Quinn P.M."/>
            <person name="Dwyer C.M."/>
            <person name="Gately M.K."/>
            <person name="Gubler U."/>
        </authorList>
    </citation>
    <scope>NUCLEOTIDE SEQUENCE [MRNA]</scope>
    <scope>SUBUNIT</scope>
    <scope>SUBCELLULAR LOCATION</scope>
    <source>
        <strain>C57BL/6J</strain>
        <tissue>Spleen</tissue>
    </source>
</reference>
<reference key="2">
    <citation type="journal article" date="1996" name="Eur. J. Immunol.">
        <title>Structure and chromosomal location of the mouse interleukin-12 p35 and p40 subunit genes.</title>
        <authorList>
            <person name="Tone Y."/>
            <person name="Thompson S.A."/>
            <person name="Babik J.M."/>
            <person name="Nolan K.F."/>
            <person name="Tone M."/>
            <person name="Raven C."/>
            <person name="Waldmann H."/>
        </authorList>
    </citation>
    <scope>NUCLEOTIDE SEQUENCE [GENOMIC DNA]</scope>
</reference>
<reference key="3">
    <citation type="journal article" date="1996" name="J. Immunol.">
        <title>Molecular cloning and characterization of murine IL-12 genes.</title>
        <authorList>
            <person name="Yoshimoto T."/>
            <person name="Kojima K."/>
            <person name="Funakoshi T."/>
            <person name="Endo Y."/>
            <person name="Fujita T."/>
            <person name="Nariuchi H."/>
        </authorList>
    </citation>
    <scope>NUCLEOTIDE SEQUENCE [GENOMIC DNA] OF 1-5</scope>
    <source>
        <strain>129/Sv</strain>
    </source>
</reference>
<reference key="4">
    <citation type="journal article" date="1996" name="Eur. J. Immunol.">
        <title>Genetically resistant mice lacking interleukin-12 are susceptible to infection with Leishmania major and mount a polarized Th2 cell response.</title>
        <authorList>
            <person name="Mattner F."/>
            <person name="Magram J."/>
            <person name="Ferrante J."/>
            <person name="Launois P."/>
            <person name="Di Padova K."/>
            <person name="Behin R."/>
            <person name="Gately M.K."/>
            <person name="Louis J.A."/>
            <person name="Alber G."/>
        </authorList>
    </citation>
    <scope>FUNCTION</scope>
    <scope>DISRUPTION PHENOTYPE</scope>
</reference>
<reference key="5">
    <citation type="journal article" date="2007" name="Nature">
        <title>The inhibitory cytokine IL-35 contributes to regulatory T-cell function.</title>
        <authorList>
            <person name="Collison L.W."/>
            <person name="Workman C.J."/>
            <person name="Kuo T.T."/>
            <person name="Boyd K."/>
            <person name="Wang Y."/>
            <person name="Vignali K.M."/>
            <person name="Cross R."/>
            <person name="Sehy D."/>
            <person name="Blumberg R.S."/>
            <person name="Vignali D.A."/>
        </authorList>
    </citation>
    <scope>FUNCTION</scope>
    <scope>DISRUPTION PHENOTYPE</scope>
</reference>
<reference key="6">
    <citation type="journal article" date="2018" name="Front. Pharmacol.">
        <title>Interleukin-35 attenuates D-Galactosamine/Lipopolysaccharide-induced liver injury via enhancing interleukin-10 production in Kupffer cells.</title>
        <authorList>
            <person name="Zheng X.F."/>
            <person name="Hu X.Y."/>
            <person name="Ma B."/>
            <person name="Fang H."/>
            <person name="Zhang F."/>
            <person name="Mao Y.F."/>
            <person name="Yang F.Y."/>
            <person name="Xiao S.C."/>
            <person name="Xia Z.F."/>
        </authorList>
    </citation>
    <scope>FUNCTION</scope>
</reference>
<reference key="7">
    <citation type="journal article" date="2022" name="J. Crohns. Colitis.">
        <title>Non-autophagy Role of Atg5 and NBR1 in Unconventional Secretion of IL-12 Prevents Gut Dysbiosis and Inflammation.</title>
        <authorList>
            <person name="Merkley S.D."/>
            <person name="Goodfellow S.M."/>
            <person name="Guo Y."/>
            <person name="Wilton Z.E.R."/>
            <person name="Byrum J.R."/>
            <person name="Schwalm K.C."/>
            <person name="Dinwiddie D.L."/>
            <person name="Gullapalli R.R."/>
            <person name="Deretic V."/>
            <person name="Jimenez Hernandez A."/>
            <person name="Bradfute S.B."/>
            <person name="In J.G."/>
            <person name="Castillo E.F."/>
        </authorList>
    </citation>
    <scope>INTERACTION WITH NBR1</scope>
    <scope>SUBCELLULAR LOCATION</scope>
</reference>
<dbReference type="EMBL" id="M86672">
    <property type="protein sequence ID" value="AAA39292.1"/>
    <property type="molecule type" value="mRNA"/>
</dbReference>
<dbReference type="EMBL" id="S82419">
    <property type="protein sequence ID" value="AAB37382.1"/>
    <property type="molecule type" value="Genomic_DNA"/>
</dbReference>
<dbReference type="EMBL" id="S82412">
    <property type="protein sequence ID" value="AAB37382.1"/>
    <property type="status" value="JOINED"/>
    <property type="molecule type" value="Genomic_DNA"/>
</dbReference>
<dbReference type="EMBL" id="S82414">
    <property type="protein sequence ID" value="AAB37382.1"/>
    <property type="status" value="JOINED"/>
    <property type="molecule type" value="Genomic_DNA"/>
</dbReference>
<dbReference type="EMBL" id="S82417">
    <property type="protein sequence ID" value="AAB37382.1"/>
    <property type="status" value="JOINED"/>
    <property type="molecule type" value="Genomic_DNA"/>
</dbReference>
<dbReference type="EMBL" id="S82418">
    <property type="protein sequence ID" value="AAB37382.1"/>
    <property type="status" value="JOINED"/>
    <property type="molecule type" value="Genomic_DNA"/>
</dbReference>
<dbReference type="EMBL" id="D63334">
    <property type="protein sequence ID" value="BAA09647.1"/>
    <property type="molecule type" value="Genomic_DNA"/>
</dbReference>
<dbReference type="CCDS" id="CCDS17400.1"/>
<dbReference type="PIR" id="I56135">
    <property type="entry name" value="I56135"/>
</dbReference>
<dbReference type="RefSeq" id="NP_001152896.2">
    <property type="nucleotide sequence ID" value="NM_001159424.3"/>
</dbReference>
<dbReference type="RefSeq" id="NP_032377.1">
    <property type="nucleotide sequence ID" value="NM_008351.4"/>
</dbReference>
<dbReference type="PDB" id="8CR6">
    <property type="method" value="X-ray"/>
    <property type="resolution" value="2.85 A"/>
    <property type="chains" value="B=1-215"/>
</dbReference>
<dbReference type="PDB" id="8ODZ">
    <property type="method" value="EM"/>
    <property type="resolution" value="3.60 A"/>
    <property type="chains" value="A=23-215"/>
</dbReference>
<dbReference type="PDB" id="8OE0">
    <property type="method" value="EM"/>
    <property type="resolution" value="4.60 A"/>
    <property type="chains" value="A=23-215"/>
</dbReference>
<dbReference type="PDB" id="8PB1">
    <property type="method" value="EM"/>
    <property type="resolution" value="3.50 A"/>
    <property type="chains" value="A=23-215"/>
</dbReference>
<dbReference type="PDBsum" id="8CR6"/>
<dbReference type="PDBsum" id="8ODZ"/>
<dbReference type="PDBsum" id="8OE0"/>
<dbReference type="PDBsum" id="8PB1"/>
<dbReference type="EMDB" id="EMD-16820"/>
<dbReference type="EMDB" id="EMD-16821"/>
<dbReference type="EMDB" id="EMD-16822"/>
<dbReference type="EMDB" id="EMD-16823"/>
<dbReference type="EMDB" id="EMD-17580"/>
<dbReference type="SMR" id="P43431"/>
<dbReference type="ComplexPortal" id="CPX-387">
    <property type="entry name" value="Interleukin-12 complex"/>
</dbReference>
<dbReference type="ComplexPortal" id="CPX-388">
    <property type="entry name" value="Interleukin-12-receptor complex"/>
</dbReference>
<dbReference type="DIP" id="DIP-60363N"/>
<dbReference type="FunCoup" id="P43431">
    <property type="interactions" value="437"/>
</dbReference>
<dbReference type="IntAct" id="P43431">
    <property type="interactions" value="1"/>
</dbReference>
<dbReference type="STRING" id="10090.ENSMUSP00000103446"/>
<dbReference type="GlyCosmos" id="P43431">
    <property type="glycosylation" value="1 site, No reported glycans"/>
</dbReference>
<dbReference type="GlyGen" id="P43431">
    <property type="glycosylation" value="1 site, 1 N-linked glycan (1 site)"/>
</dbReference>
<dbReference type="PhosphoSitePlus" id="P43431"/>
<dbReference type="PaxDb" id="10090-ENSMUSP00000029345"/>
<dbReference type="Antibodypedia" id="853">
    <property type="antibodies" value="1011 antibodies from 45 providers"/>
</dbReference>
<dbReference type="DNASU" id="16159"/>
<dbReference type="Ensembl" id="ENSMUST00000107816.5">
    <property type="protein sequence ID" value="ENSMUSP00000103446.3"/>
    <property type="gene ID" value="ENSMUSG00000027776.13"/>
</dbReference>
<dbReference type="GeneID" id="16159"/>
<dbReference type="KEGG" id="mmu:16159"/>
<dbReference type="UCSC" id="uc008plv.3">
    <property type="organism name" value="mouse"/>
</dbReference>
<dbReference type="AGR" id="MGI:96539"/>
<dbReference type="CTD" id="3592"/>
<dbReference type="MGI" id="MGI:96539">
    <property type="gene designation" value="Il12a"/>
</dbReference>
<dbReference type="VEuPathDB" id="HostDB:ENSMUSG00000027776"/>
<dbReference type="eggNOG" id="ENOG502S8JN">
    <property type="taxonomic scope" value="Eukaryota"/>
</dbReference>
<dbReference type="GeneTree" id="ENSGT00390000016906"/>
<dbReference type="HOGENOM" id="CLU_108538_0_0_1"/>
<dbReference type="InParanoid" id="P43431"/>
<dbReference type="OMA" id="TMNESCL"/>
<dbReference type="OrthoDB" id="9893660at2759"/>
<dbReference type="PhylomeDB" id="P43431"/>
<dbReference type="Reactome" id="R-MMU-8984722">
    <property type="pathway name" value="Interleukin-35 Signalling"/>
</dbReference>
<dbReference type="Reactome" id="R-MMU-9020591">
    <property type="pathway name" value="Interleukin-12 signaling"/>
</dbReference>
<dbReference type="BioGRID-ORCS" id="16159">
    <property type="hits" value="3 hits in 79 CRISPR screens"/>
</dbReference>
<dbReference type="PRO" id="PR:P43431"/>
<dbReference type="Proteomes" id="UP000000589">
    <property type="component" value="Chromosome 3"/>
</dbReference>
<dbReference type="RNAct" id="P43431">
    <property type="molecule type" value="protein"/>
</dbReference>
<dbReference type="Bgee" id="ENSMUSG00000027776">
    <property type="expression patterns" value="Expressed in hindlimb stylopod muscle and 41 other cell types or tissues"/>
</dbReference>
<dbReference type="ExpressionAtlas" id="P43431">
    <property type="expression patterns" value="baseline and differential"/>
</dbReference>
<dbReference type="GO" id="GO:0009986">
    <property type="term" value="C:cell surface"/>
    <property type="evidence" value="ECO:0000314"/>
    <property type="project" value="MGI"/>
</dbReference>
<dbReference type="GO" id="GO:0005737">
    <property type="term" value="C:cytoplasm"/>
    <property type="evidence" value="ECO:0000314"/>
    <property type="project" value="MGI"/>
</dbReference>
<dbReference type="GO" id="GO:0005788">
    <property type="term" value="C:endoplasmic reticulum lumen"/>
    <property type="evidence" value="ECO:0000304"/>
    <property type="project" value="Reactome"/>
</dbReference>
<dbReference type="GO" id="GO:0031904">
    <property type="term" value="C:endosome lumen"/>
    <property type="evidence" value="ECO:0000304"/>
    <property type="project" value="Reactome"/>
</dbReference>
<dbReference type="GO" id="GO:0005576">
    <property type="term" value="C:extracellular region"/>
    <property type="evidence" value="ECO:0000304"/>
    <property type="project" value="Reactome"/>
</dbReference>
<dbReference type="GO" id="GO:0005615">
    <property type="term" value="C:extracellular space"/>
    <property type="evidence" value="ECO:0000314"/>
    <property type="project" value="MGI"/>
</dbReference>
<dbReference type="GO" id="GO:0005796">
    <property type="term" value="C:Golgi lumen"/>
    <property type="evidence" value="ECO:0000304"/>
    <property type="project" value="Reactome"/>
</dbReference>
<dbReference type="GO" id="GO:0043514">
    <property type="term" value="C:interleukin-12 complex"/>
    <property type="evidence" value="ECO:0000314"/>
    <property type="project" value="MGI"/>
</dbReference>
<dbReference type="GO" id="GO:0005125">
    <property type="term" value="F:cytokine activity"/>
    <property type="evidence" value="ECO:0007669"/>
    <property type="project" value="UniProtKB-KW"/>
</dbReference>
<dbReference type="GO" id="GO:0008083">
    <property type="term" value="F:growth factor activity"/>
    <property type="evidence" value="ECO:0007669"/>
    <property type="project" value="UniProtKB-KW"/>
</dbReference>
<dbReference type="GO" id="GO:0042163">
    <property type="term" value="F:interleukin-12 beta subunit binding"/>
    <property type="evidence" value="ECO:0000353"/>
    <property type="project" value="MGI"/>
</dbReference>
<dbReference type="GO" id="GO:0005143">
    <property type="term" value="F:interleukin-12 receptor binding"/>
    <property type="evidence" value="ECO:0007669"/>
    <property type="project" value="InterPro"/>
</dbReference>
<dbReference type="GO" id="GO:0008283">
    <property type="term" value="P:cell population proliferation"/>
    <property type="evidence" value="ECO:0000314"/>
    <property type="project" value="MGI"/>
</dbReference>
<dbReference type="GO" id="GO:0071222">
    <property type="term" value="P:cellular response to lipopolysaccharide"/>
    <property type="evidence" value="ECO:0000314"/>
    <property type="project" value="MGI"/>
</dbReference>
<dbReference type="GO" id="GO:0042832">
    <property type="term" value="P:defense response to protozoan"/>
    <property type="evidence" value="ECO:0000314"/>
    <property type="project" value="MGI"/>
</dbReference>
<dbReference type="GO" id="GO:0006955">
    <property type="term" value="P:immune response"/>
    <property type="evidence" value="ECO:0007669"/>
    <property type="project" value="InterPro"/>
</dbReference>
<dbReference type="GO" id="GO:0045582">
    <property type="term" value="P:positive regulation of T cell differentiation"/>
    <property type="evidence" value="ECO:0000316"/>
    <property type="project" value="MGI"/>
</dbReference>
<dbReference type="GO" id="GO:0042102">
    <property type="term" value="P:positive regulation of T cell proliferation"/>
    <property type="evidence" value="ECO:0000314"/>
    <property type="project" value="MGI"/>
</dbReference>
<dbReference type="GO" id="GO:0032729">
    <property type="term" value="P:positive regulation of type II interferon production"/>
    <property type="evidence" value="ECO:0000314"/>
    <property type="project" value="MGI"/>
</dbReference>
<dbReference type="GO" id="GO:0042098">
    <property type="term" value="P:T cell proliferation"/>
    <property type="evidence" value="ECO:0000314"/>
    <property type="project" value="MGI"/>
</dbReference>
<dbReference type="GO" id="GO:0035711">
    <property type="term" value="P:T-helper 1 cell activation"/>
    <property type="evidence" value="ECO:0000314"/>
    <property type="project" value="MGI"/>
</dbReference>
<dbReference type="FunFam" id="1.20.1250.10:FF:000020">
    <property type="entry name" value="Interleukin-12 subunit alpha"/>
    <property type="match status" value="1"/>
</dbReference>
<dbReference type="Gene3D" id="1.20.1250.10">
    <property type="match status" value="1"/>
</dbReference>
<dbReference type="InterPro" id="IPR009079">
    <property type="entry name" value="4_helix_cytokine-like_core"/>
</dbReference>
<dbReference type="InterPro" id="IPR050676">
    <property type="entry name" value="IL-12"/>
</dbReference>
<dbReference type="InterPro" id="IPR004281">
    <property type="entry name" value="IL-12_alpha"/>
</dbReference>
<dbReference type="PANTHER" id="PTHR48485:SF1">
    <property type="entry name" value="INTERLEUKIN-12 SUBUNIT ALPHA"/>
    <property type="match status" value="1"/>
</dbReference>
<dbReference type="PANTHER" id="PTHR48485">
    <property type="entry name" value="INTERLEUKIN-12 SUBUNIT BETA-RELATED"/>
    <property type="match status" value="1"/>
</dbReference>
<dbReference type="Pfam" id="PF03039">
    <property type="entry name" value="IL12"/>
    <property type="match status" value="1"/>
</dbReference>
<dbReference type="SUPFAM" id="SSF47266">
    <property type="entry name" value="4-helical cytokines"/>
    <property type="match status" value="1"/>
</dbReference>
<accession>P43431</accession>
<name>IL12A_MOUSE</name>
<feature type="signal peptide" evidence="1">
    <location>
        <begin position="1"/>
        <end position="22"/>
    </location>
</feature>
<feature type="chain" id="PRO_0000015608" description="Interleukin-12 subunit alpha">
    <location>
        <begin position="23"/>
        <end position="215"/>
    </location>
</feature>
<feature type="glycosylation site" description="N-linked (GlcNAc...) asparagine" evidence="3">
    <location>
        <position position="89"/>
    </location>
</feature>
<feature type="disulfide bond" evidence="2">
    <location>
        <begin position="33"/>
        <end position="106"/>
    </location>
</feature>
<feature type="disulfide bond" evidence="1">
    <location>
        <begin position="60"/>
        <end position="192"/>
    </location>
</feature>
<feature type="disulfide bond" evidence="1">
    <location>
        <begin position="81"/>
        <end position="119"/>
    </location>
</feature>
<feature type="disulfide bond" description="Interchain (with C-197 in IL12B)" evidence="1">
    <location>
        <position position="92"/>
    </location>
</feature>
<feature type="helix" evidence="10">
    <location>
        <begin position="33"/>
        <end position="54"/>
    </location>
</feature>
<feature type="turn" evidence="10">
    <location>
        <begin position="56"/>
        <end position="59"/>
    </location>
</feature>
<feature type="turn" evidence="10">
    <location>
        <begin position="72"/>
        <end position="74"/>
    </location>
</feature>
<feature type="helix" evidence="10">
    <location>
        <begin position="77"/>
        <end position="80"/>
    </location>
</feature>
<feature type="helix" evidence="10">
    <location>
        <begin position="84"/>
        <end position="86"/>
    </location>
</feature>
<feature type="helix" evidence="10">
    <location>
        <begin position="114"/>
        <end position="143"/>
    </location>
</feature>
<feature type="helix" evidence="10">
    <location>
        <begin position="153"/>
        <end position="167"/>
    </location>
</feature>
<feature type="helix" evidence="10">
    <location>
        <begin position="184"/>
        <end position="212"/>
    </location>
</feature>
<gene>
    <name type="primary">Il12a</name>
</gene>
<comment type="function">
    <text evidence="2 5 6 8">Heterodimerizes with IL12B to form the IL-12 cytokine or with EBI3/IL27B to form the IL-35 cytokine. IL-12 is primarily produced by professional antigen-presenting cells (APCs) such as B-cells and dendritic cells (DCs) as well as macrophages and granulocytes and regulates T-cell and natural killer-cell responses, induces the production of interferon-gamma (IFN-gamma), favors the differentiation of T-helper 1 (Th1) cells and is an important link between innate resistance and adaptive immunity (PubMed:8766560). Mechanistically, exerts its biological effects through a receptor composed of IL12R1 and IL12R2 subunits. Binding to the receptor results in the rapid tyrosine phosphorylation of a number of cellular substrates including the JAK family kinases TYK2 and JAK2. In turn, recruited STAT4 gets phosphorylated and translocates to the nucleus where it regulates cytokine/growth factor responsive genes (By similarity). As part of IL-35, plays essential roles in maintaining the immune homeostasis of the liver microenvironment and also functions as an immune-suppressive cytokine (PubMed:18033300, PubMed:30197594). Mediates biological events through unconventional receptors composed of IL12RB2 and gp130/IL6ST heterodimers or homodimers. Signaling requires the transcription factors STAT1 and STAT4, which form a unique heterodimer that binds to distinct DNA sites (By similarity).</text>
</comment>
<comment type="subunit">
    <text evidence="2 4 7">Heterodimer with IL12B; disulfide-linked (PubMed:1350290). This heterodimer is known as interleukin IL-12 (PubMed:1350290). Heterodimer with EBI3/IL27B; not disulfide-linked (By similarity). This heterodimer is known as interleukin IL-35 (By similarity). Interacts with NBR1; this interaction promotes IL-12 secretion (PubMed:34374750).</text>
</comment>
<comment type="interaction">
    <interactant intactId="EBI-3862959">
        <id>P43431</id>
    </interactant>
    <interactant intactId="EBI-3862967">
        <id>O35228</id>
        <label>Ebi3</label>
    </interactant>
    <organismsDiffer>false</organismsDiffer>
    <experiments>2</experiments>
</comment>
<comment type="subcellular location">
    <subcellularLocation>
        <location evidence="4 7">Secreted</location>
    </subcellularLocation>
</comment>
<comment type="disruption phenotype">
    <text evidence="5 8">Deletion mutant mice display normal development (PubMed:8766560). However, they are unable to restrict the progression of Leishmania major infection with strong parasite load in lymphoid tissues observed (PubMed:8766560). In addition, regulatory T-cells are functionally defective and mice are unable to control colitis (resembling inflammatory bowel disease, IBD) (PubMed:18033300).</text>
</comment>
<comment type="similarity">
    <text evidence="9">Belongs to the IL-6 superfamily.</text>
</comment>
<protein>
    <recommendedName>
        <fullName>Interleukin-12 subunit alpha</fullName>
        <shortName>IL-12A</shortName>
    </recommendedName>
    <alternativeName>
        <fullName>Cytotoxic lymphocyte maturation factor 35 kDa subunit</fullName>
        <shortName>CLMF p35</shortName>
    </alternativeName>
    <alternativeName>
        <fullName>IL-12 subunit p35</fullName>
    </alternativeName>
</protein>
<keyword id="KW-0002">3D-structure</keyword>
<keyword id="KW-0202">Cytokine</keyword>
<keyword id="KW-1015">Disulfide bond</keyword>
<keyword id="KW-0325">Glycoprotein</keyword>
<keyword id="KW-0339">Growth factor</keyword>
<keyword id="KW-1185">Reference proteome</keyword>
<keyword id="KW-0964">Secreted</keyword>
<keyword id="KW-0732">Signal</keyword>
<evidence type="ECO:0000250" key="1"/>
<evidence type="ECO:0000250" key="2">
    <source>
        <dbReference type="UniProtKB" id="P29459"/>
    </source>
</evidence>
<evidence type="ECO:0000255" key="3"/>
<evidence type="ECO:0000269" key="4">
    <source>
    </source>
</evidence>
<evidence type="ECO:0000269" key="5">
    <source>
    </source>
</evidence>
<evidence type="ECO:0000269" key="6">
    <source>
    </source>
</evidence>
<evidence type="ECO:0000269" key="7">
    <source>
    </source>
</evidence>
<evidence type="ECO:0000269" key="8">
    <source>
    </source>
</evidence>
<evidence type="ECO:0000305" key="9"/>
<evidence type="ECO:0007829" key="10">
    <source>
        <dbReference type="PDB" id="8CR6"/>
    </source>
</evidence>
<organism>
    <name type="scientific">Mus musculus</name>
    <name type="common">Mouse</name>
    <dbReference type="NCBI Taxonomy" id="10090"/>
    <lineage>
        <taxon>Eukaryota</taxon>
        <taxon>Metazoa</taxon>
        <taxon>Chordata</taxon>
        <taxon>Craniata</taxon>
        <taxon>Vertebrata</taxon>
        <taxon>Euteleostomi</taxon>
        <taxon>Mammalia</taxon>
        <taxon>Eutheria</taxon>
        <taxon>Euarchontoglires</taxon>
        <taxon>Glires</taxon>
        <taxon>Rodentia</taxon>
        <taxon>Myomorpha</taxon>
        <taxon>Muroidea</taxon>
        <taxon>Muridae</taxon>
        <taxon>Murinae</taxon>
        <taxon>Mus</taxon>
        <taxon>Mus</taxon>
    </lineage>
</organism>